<gene>
    <name evidence="1" type="primary">rpl20</name>
</gene>
<reference key="1">
    <citation type="journal article" date="2005" name="BMC Biol.">
        <title>The complete chloroplast DNA sequences of the charophycean green algae Staurastrum and Zygnema reveal that the chloroplast genome underwent extensive changes during the evolution of the Zygnematales.</title>
        <authorList>
            <person name="Turmel M."/>
            <person name="Otis C."/>
            <person name="Lemieux C."/>
        </authorList>
    </citation>
    <scope>NUCLEOTIDE SEQUENCE [LARGE SCALE GENOMIC DNA]</scope>
</reference>
<comment type="function">
    <text evidence="1">Binds directly to 23S ribosomal RNA and is necessary for the in vitro assembly process of the 50S ribosomal subunit. It is not involved in the protein synthesizing functions of that subunit.</text>
</comment>
<comment type="subcellular location">
    <subcellularLocation>
        <location>Plastid</location>
        <location>Chloroplast</location>
    </subcellularLocation>
</comment>
<comment type="similarity">
    <text evidence="1">Belongs to the bacterial ribosomal protein bL20 family.</text>
</comment>
<accession>Q32RT9</accession>
<organism>
    <name type="scientific">Staurastrum punctulatum</name>
    <name type="common">Green alga</name>
    <name type="synonym">Cosmoastrum punctulatum</name>
    <dbReference type="NCBI Taxonomy" id="102822"/>
    <lineage>
        <taxon>Eukaryota</taxon>
        <taxon>Viridiplantae</taxon>
        <taxon>Streptophyta</taxon>
        <taxon>Zygnematophyceae</taxon>
        <taxon>Zygnematophycidae</taxon>
        <taxon>Desmidiales</taxon>
        <taxon>Desmidiaceae</taxon>
        <taxon>Staurastrum</taxon>
    </lineage>
</organism>
<geneLocation type="chloroplast"/>
<name>RK20_STAPU</name>
<evidence type="ECO:0000255" key="1">
    <source>
        <dbReference type="HAMAP-Rule" id="MF_00382"/>
    </source>
</evidence>
<evidence type="ECO:0000305" key="2"/>
<feature type="chain" id="PRO_0000276430" description="Large ribosomal subunit protein bL20c">
    <location>
        <begin position="1"/>
        <end position="113"/>
    </location>
</feature>
<keyword id="KW-0150">Chloroplast</keyword>
<keyword id="KW-0934">Plastid</keyword>
<keyword id="KW-0687">Ribonucleoprotein</keyword>
<keyword id="KW-0689">Ribosomal protein</keyword>
<keyword id="KW-0694">RNA-binding</keyword>
<keyword id="KW-0699">rRNA-binding</keyword>
<sequence>MTRVKRGYVAVRRRNRVLERAAGFRGAHSRLFRPAKQQVMKALVASKRDRDKRKRDFRKLWITRINAAVRKQGMSYSRFIHQLYQSKILINRKMIAQIAVLDENGFTSIVNNI</sequence>
<dbReference type="EMBL" id="AY958085">
    <property type="protein sequence ID" value="AAX45740.1"/>
    <property type="molecule type" value="Genomic_DNA"/>
</dbReference>
<dbReference type="RefSeq" id="YP_636437.1">
    <property type="nucleotide sequence ID" value="NC_008116.1"/>
</dbReference>
<dbReference type="SMR" id="Q32RT9"/>
<dbReference type="GeneID" id="4108603"/>
<dbReference type="GO" id="GO:0009507">
    <property type="term" value="C:chloroplast"/>
    <property type="evidence" value="ECO:0007669"/>
    <property type="project" value="UniProtKB-SubCell"/>
</dbReference>
<dbReference type="GO" id="GO:1990904">
    <property type="term" value="C:ribonucleoprotein complex"/>
    <property type="evidence" value="ECO:0007669"/>
    <property type="project" value="UniProtKB-KW"/>
</dbReference>
<dbReference type="GO" id="GO:0005840">
    <property type="term" value="C:ribosome"/>
    <property type="evidence" value="ECO:0007669"/>
    <property type="project" value="UniProtKB-KW"/>
</dbReference>
<dbReference type="GO" id="GO:0019843">
    <property type="term" value="F:rRNA binding"/>
    <property type="evidence" value="ECO:0007669"/>
    <property type="project" value="UniProtKB-UniRule"/>
</dbReference>
<dbReference type="GO" id="GO:0003735">
    <property type="term" value="F:structural constituent of ribosome"/>
    <property type="evidence" value="ECO:0007669"/>
    <property type="project" value="InterPro"/>
</dbReference>
<dbReference type="GO" id="GO:0000027">
    <property type="term" value="P:ribosomal large subunit assembly"/>
    <property type="evidence" value="ECO:0007669"/>
    <property type="project" value="UniProtKB-UniRule"/>
</dbReference>
<dbReference type="GO" id="GO:0006412">
    <property type="term" value="P:translation"/>
    <property type="evidence" value="ECO:0007669"/>
    <property type="project" value="InterPro"/>
</dbReference>
<dbReference type="CDD" id="cd07026">
    <property type="entry name" value="Ribosomal_L20"/>
    <property type="match status" value="1"/>
</dbReference>
<dbReference type="FunFam" id="1.10.1900.20:FF:000001">
    <property type="entry name" value="50S ribosomal protein L20"/>
    <property type="match status" value="1"/>
</dbReference>
<dbReference type="Gene3D" id="6.10.160.10">
    <property type="match status" value="1"/>
</dbReference>
<dbReference type="Gene3D" id="1.10.1900.20">
    <property type="entry name" value="Ribosomal protein L20"/>
    <property type="match status" value="1"/>
</dbReference>
<dbReference type="HAMAP" id="MF_00382">
    <property type="entry name" value="Ribosomal_bL20"/>
    <property type="match status" value="1"/>
</dbReference>
<dbReference type="InterPro" id="IPR005813">
    <property type="entry name" value="Ribosomal_bL20"/>
</dbReference>
<dbReference type="InterPro" id="IPR049946">
    <property type="entry name" value="RIBOSOMAL_L20_CS"/>
</dbReference>
<dbReference type="InterPro" id="IPR035566">
    <property type="entry name" value="Ribosomal_protein_bL20_C"/>
</dbReference>
<dbReference type="NCBIfam" id="TIGR01032">
    <property type="entry name" value="rplT_bact"/>
    <property type="match status" value="1"/>
</dbReference>
<dbReference type="PANTHER" id="PTHR10986">
    <property type="entry name" value="39S RIBOSOMAL PROTEIN L20"/>
    <property type="match status" value="1"/>
</dbReference>
<dbReference type="Pfam" id="PF00453">
    <property type="entry name" value="Ribosomal_L20"/>
    <property type="match status" value="1"/>
</dbReference>
<dbReference type="PRINTS" id="PR00062">
    <property type="entry name" value="RIBOSOMALL20"/>
</dbReference>
<dbReference type="SUPFAM" id="SSF74731">
    <property type="entry name" value="Ribosomal protein L20"/>
    <property type="match status" value="1"/>
</dbReference>
<dbReference type="PROSITE" id="PS00937">
    <property type="entry name" value="RIBOSOMAL_L20"/>
    <property type="match status" value="1"/>
</dbReference>
<proteinExistence type="inferred from homology"/>
<protein>
    <recommendedName>
        <fullName evidence="1">Large ribosomal subunit protein bL20c</fullName>
    </recommendedName>
    <alternativeName>
        <fullName evidence="2">50S ribosomal protein L20, chloroplastic</fullName>
    </alternativeName>
</protein>